<comment type="function">
    <text evidence="1">Binds to the 23S rRNA.</text>
</comment>
<comment type="similarity">
    <text evidence="1">Belongs to the bacterial ribosomal protein bL9 family.</text>
</comment>
<keyword id="KW-0687">Ribonucleoprotein</keyword>
<keyword id="KW-0689">Ribosomal protein</keyword>
<keyword id="KW-0694">RNA-binding</keyword>
<keyword id="KW-0699">rRNA-binding</keyword>
<name>RL9_YERPS</name>
<accession>Q66F99</accession>
<reference key="1">
    <citation type="journal article" date="2004" name="Proc. Natl. Acad. Sci. U.S.A.">
        <title>Insights into the evolution of Yersinia pestis through whole-genome comparison with Yersinia pseudotuberculosis.</title>
        <authorList>
            <person name="Chain P.S.G."/>
            <person name="Carniel E."/>
            <person name="Larimer F.W."/>
            <person name="Lamerdin J."/>
            <person name="Stoutland P.O."/>
            <person name="Regala W.M."/>
            <person name="Georgescu A.M."/>
            <person name="Vergez L.M."/>
            <person name="Land M.L."/>
            <person name="Motin V.L."/>
            <person name="Brubaker R.R."/>
            <person name="Fowler J."/>
            <person name="Hinnebusch J."/>
            <person name="Marceau M."/>
            <person name="Medigue C."/>
            <person name="Simonet M."/>
            <person name="Chenal-Francisque V."/>
            <person name="Souza B."/>
            <person name="Dacheux D."/>
            <person name="Elliott J.M."/>
            <person name="Derbise A."/>
            <person name="Hauser L.J."/>
            <person name="Garcia E."/>
        </authorList>
    </citation>
    <scope>NUCLEOTIDE SEQUENCE [LARGE SCALE GENOMIC DNA]</scope>
    <source>
        <strain>IP32953</strain>
    </source>
</reference>
<proteinExistence type="inferred from homology"/>
<sequence>MQVILLDKVANLGSLGDQVNVKAGYARNFLVPQGKAVPATKKNVEFFEARRAELEAKLADVLAAAEARATKINELVSVTISSKAGDEGKLFGSIGTRDIADAVTAAGVEVAKSEVRLPNGVLRTAGEHEVHFQVHSDVFAKLNVVVVPEA</sequence>
<evidence type="ECO:0000255" key="1">
    <source>
        <dbReference type="HAMAP-Rule" id="MF_00503"/>
    </source>
</evidence>
<evidence type="ECO:0000305" key="2"/>
<organism>
    <name type="scientific">Yersinia pseudotuberculosis serotype I (strain IP32953)</name>
    <dbReference type="NCBI Taxonomy" id="273123"/>
    <lineage>
        <taxon>Bacteria</taxon>
        <taxon>Pseudomonadati</taxon>
        <taxon>Pseudomonadota</taxon>
        <taxon>Gammaproteobacteria</taxon>
        <taxon>Enterobacterales</taxon>
        <taxon>Yersiniaceae</taxon>
        <taxon>Yersinia</taxon>
    </lineage>
</organism>
<protein>
    <recommendedName>
        <fullName evidence="1">Large ribosomal subunit protein bL9</fullName>
    </recommendedName>
    <alternativeName>
        <fullName evidence="2">50S ribosomal protein L9</fullName>
    </alternativeName>
</protein>
<feature type="chain" id="PRO_0000236625" description="Large ribosomal subunit protein bL9">
    <location>
        <begin position="1"/>
        <end position="150"/>
    </location>
</feature>
<dbReference type="EMBL" id="BX936398">
    <property type="protein sequence ID" value="CAH19681.1"/>
    <property type="molecule type" value="Genomic_DNA"/>
</dbReference>
<dbReference type="RefSeq" id="WP_002210156.1">
    <property type="nucleotide sequence ID" value="NZ_CP009712.1"/>
</dbReference>
<dbReference type="SMR" id="Q66F99"/>
<dbReference type="GeneID" id="57975178"/>
<dbReference type="KEGG" id="ypo:BZ17_2124"/>
<dbReference type="KEGG" id="yps:YPTB0441"/>
<dbReference type="PATRIC" id="fig|273123.14.peg.2251"/>
<dbReference type="Proteomes" id="UP000001011">
    <property type="component" value="Chromosome"/>
</dbReference>
<dbReference type="GO" id="GO:1990904">
    <property type="term" value="C:ribonucleoprotein complex"/>
    <property type="evidence" value="ECO:0007669"/>
    <property type="project" value="UniProtKB-KW"/>
</dbReference>
<dbReference type="GO" id="GO:0005840">
    <property type="term" value="C:ribosome"/>
    <property type="evidence" value="ECO:0007669"/>
    <property type="project" value="UniProtKB-KW"/>
</dbReference>
<dbReference type="GO" id="GO:0019843">
    <property type="term" value="F:rRNA binding"/>
    <property type="evidence" value="ECO:0007669"/>
    <property type="project" value="UniProtKB-UniRule"/>
</dbReference>
<dbReference type="GO" id="GO:0003735">
    <property type="term" value="F:structural constituent of ribosome"/>
    <property type="evidence" value="ECO:0007669"/>
    <property type="project" value="InterPro"/>
</dbReference>
<dbReference type="GO" id="GO:0006412">
    <property type="term" value="P:translation"/>
    <property type="evidence" value="ECO:0007669"/>
    <property type="project" value="UniProtKB-UniRule"/>
</dbReference>
<dbReference type="FunFam" id="3.10.430.100:FF:000001">
    <property type="entry name" value="50S ribosomal protein L9"/>
    <property type="match status" value="1"/>
</dbReference>
<dbReference type="FunFam" id="3.40.5.10:FF:000001">
    <property type="entry name" value="50S ribosomal protein L9"/>
    <property type="match status" value="1"/>
</dbReference>
<dbReference type="Gene3D" id="3.10.430.100">
    <property type="entry name" value="Ribosomal protein L9, C-terminal domain"/>
    <property type="match status" value="1"/>
</dbReference>
<dbReference type="Gene3D" id="3.40.5.10">
    <property type="entry name" value="Ribosomal protein L9, N-terminal domain"/>
    <property type="match status" value="1"/>
</dbReference>
<dbReference type="HAMAP" id="MF_00503">
    <property type="entry name" value="Ribosomal_bL9"/>
    <property type="match status" value="1"/>
</dbReference>
<dbReference type="InterPro" id="IPR000244">
    <property type="entry name" value="Ribosomal_bL9"/>
</dbReference>
<dbReference type="InterPro" id="IPR009027">
    <property type="entry name" value="Ribosomal_bL9/RNase_H1_N"/>
</dbReference>
<dbReference type="InterPro" id="IPR020594">
    <property type="entry name" value="Ribosomal_bL9_bac/chp"/>
</dbReference>
<dbReference type="InterPro" id="IPR020069">
    <property type="entry name" value="Ribosomal_bL9_C"/>
</dbReference>
<dbReference type="InterPro" id="IPR036791">
    <property type="entry name" value="Ribosomal_bL9_C_sf"/>
</dbReference>
<dbReference type="InterPro" id="IPR020070">
    <property type="entry name" value="Ribosomal_bL9_N"/>
</dbReference>
<dbReference type="InterPro" id="IPR036935">
    <property type="entry name" value="Ribosomal_bL9_N_sf"/>
</dbReference>
<dbReference type="NCBIfam" id="TIGR00158">
    <property type="entry name" value="L9"/>
    <property type="match status" value="1"/>
</dbReference>
<dbReference type="PANTHER" id="PTHR21368">
    <property type="entry name" value="50S RIBOSOMAL PROTEIN L9"/>
    <property type="match status" value="1"/>
</dbReference>
<dbReference type="Pfam" id="PF03948">
    <property type="entry name" value="Ribosomal_L9_C"/>
    <property type="match status" value="1"/>
</dbReference>
<dbReference type="Pfam" id="PF01281">
    <property type="entry name" value="Ribosomal_L9_N"/>
    <property type="match status" value="1"/>
</dbReference>
<dbReference type="SUPFAM" id="SSF55658">
    <property type="entry name" value="L9 N-domain-like"/>
    <property type="match status" value="1"/>
</dbReference>
<dbReference type="SUPFAM" id="SSF55653">
    <property type="entry name" value="Ribosomal protein L9 C-domain"/>
    <property type="match status" value="1"/>
</dbReference>
<dbReference type="PROSITE" id="PS00651">
    <property type="entry name" value="RIBOSOMAL_L9"/>
    <property type="match status" value="1"/>
</dbReference>
<gene>
    <name evidence="1" type="primary">rplI</name>
    <name type="ordered locus">YPTB0441</name>
</gene>